<keyword id="KW-0106">Calcium</keyword>
<keyword id="KW-0255">Endonuclease</keyword>
<keyword id="KW-0378">Hydrolase</keyword>
<keyword id="KW-0472">Membrane</keyword>
<keyword id="KW-0479">Metal-binding</keyword>
<keyword id="KW-0496">Mitochondrion</keyword>
<keyword id="KW-0540">Nuclease</keyword>
<keyword id="KW-1185">Reference proteome</keyword>
<keyword id="KW-0812">Transmembrane</keyword>
<keyword id="KW-1133">Transmembrane helix</keyword>
<dbReference type="EC" id="3.1.-.-"/>
<dbReference type="EMBL" id="CU928179">
    <property type="protein sequence ID" value="CAR29422.1"/>
    <property type="molecule type" value="Genomic_DNA"/>
</dbReference>
<dbReference type="RefSeq" id="XP_002498355.1">
    <property type="nucleotide sequence ID" value="XM_002498310.1"/>
</dbReference>
<dbReference type="FunCoup" id="C5DZY8">
    <property type="interactions" value="24"/>
</dbReference>
<dbReference type="GeneID" id="8206158"/>
<dbReference type="KEGG" id="zro:ZYRO0G08272g"/>
<dbReference type="HOGENOM" id="CLU_046484_0_1_1"/>
<dbReference type="InParanoid" id="C5DZY8"/>
<dbReference type="Proteomes" id="UP000008536">
    <property type="component" value="Chromosome G"/>
</dbReference>
<dbReference type="GO" id="GO:0016020">
    <property type="term" value="C:membrane"/>
    <property type="evidence" value="ECO:0007669"/>
    <property type="project" value="UniProtKB-SubCell"/>
</dbReference>
<dbReference type="GO" id="GO:0005739">
    <property type="term" value="C:mitochondrion"/>
    <property type="evidence" value="ECO:0007669"/>
    <property type="project" value="UniProtKB-SubCell"/>
</dbReference>
<dbReference type="GO" id="GO:0004519">
    <property type="term" value="F:endonuclease activity"/>
    <property type="evidence" value="ECO:0007669"/>
    <property type="project" value="UniProtKB-KW"/>
</dbReference>
<dbReference type="GO" id="GO:0046872">
    <property type="term" value="F:metal ion binding"/>
    <property type="evidence" value="ECO:0007669"/>
    <property type="project" value="UniProtKB-KW"/>
</dbReference>
<dbReference type="Gene3D" id="2.40.50.90">
    <property type="match status" value="1"/>
</dbReference>
<dbReference type="InterPro" id="IPR035437">
    <property type="entry name" value="SNase_OB-fold_sf"/>
</dbReference>
<dbReference type="InterPro" id="IPR016071">
    <property type="entry name" value="Staphylococal_nuclease_OB-fold"/>
</dbReference>
<dbReference type="PANTHER" id="PTHR12302">
    <property type="entry name" value="EBNA2 BINDING PROTEIN P100"/>
    <property type="match status" value="1"/>
</dbReference>
<dbReference type="PANTHER" id="PTHR12302:SF3">
    <property type="entry name" value="SERINE_THREONINE-PROTEIN KINASE 31"/>
    <property type="match status" value="1"/>
</dbReference>
<dbReference type="Pfam" id="PF00565">
    <property type="entry name" value="SNase"/>
    <property type="match status" value="1"/>
</dbReference>
<dbReference type="SMART" id="SM00318">
    <property type="entry name" value="SNc"/>
    <property type="match status" value="1"/>
</dbReference>
<dbReference type="SUPFAM" id="SSF50199">
    <property type="entry name" value="Staphylococcal nuclease"/>
    <property type="match status" value="1"/>
</dbReference>
<dbReference type="PROSITE" id="PS50830">
    <property type="entry name" value="TNASE_3"/>
    <property type="match status" value="1"/>
</dbReference>
<proteinExistence type="inferred from homology"/>
<reference key="1">
    <citation type="journal article" date="2009" name="Genome Res.">
        <title>Comparative genomics of protoploid Saccharomycetaceae.</title>
        <authorList>
            <consortium name="The Genolevures Consortium"/>
            <person name="Souciet J.-L."/>
            <person name="Dujon B."/>
            <person name="Gaillardin C."/>
            <person name="Johnston M."/>
            <person name="Baret P.V."/>
            <person name="Cliften P."/>
            <person name="Sherman D.J."/>
            <person name="Weissenbach J."/>
            <person name="Westhof E."/>
            <person name="Wincker P."/>
            <person name="Jubin C."/>
            <person name="Poulain J."/>
            <person name="Barbe V."/>
            <person name="Segurens B."/>
            <person name="Artiguenave F."/>
            <person name="Anthouard V."/>
            <person name="Vacherie B."/>
            <person name="Val M.-E."/>
            <person name="Fulton R.S."/>
            <person name="Minx P."/>
            <person name="Wilson R."/>
            <person name="Durrens P."/>
            <person name="Jean G."/>
            <person name="Marck C."/>
            <person name="Martin T."/>
            <person name="Nikolski M."/>
            <person name="Rolland T."/>
            <person name="Seret M.-L."/>
            <person name="Casaregola S."/>
            <person name="Despons L."/>
            <person name="Fairhead C."/>
            <person name="Fischer G."/>
            <person name="Lafontaine I."/>
            <person name="Leh V."/>
            <person name="Lemaire M."/>
            <person name="de Montigny J."/>
            <person name="Neuveglise C."/>
            <person name="Thierry A."/>
            <person name="Blanc-Lenfle I."/>
            <person name="Bleykasten C."/>
            <person name="Diffels J."/>
            <person name="Fritsch E."/>
            <person name="Frangeul L."/>
            <person name="Goeffon A."/>
            <person name="Jauniaux N."/>
            <person name="Kachouri-Lafond R."/>
            <person name="Payen C."/>
            <person name="Potier S."/>
            <person name="Pribylova L."/>
            <person name="Ozanne C."/>
            <person name="Richard G.-F."/>
            <person name="Sacerdot C."/>
            <person name="Straub M.-L."/>
            <person name="Talla E."/>
        </authorList>
    </citation>
    <scope>NUCLEOTIDE SEQUENCE [LARGE SCALE GENOMIC DNA]</scope>
    <source>
        <strain>ATCC 2623 / CBS 732 / BCRC 21506 / NBRC 1130 / NCYC 568 / NRRL Y-229</strain>
    </source>
</reference>
<feature type="chain" id="PRO_0000408693" description="Probable endonuclease LCL3">
    <location>
        <begin position="1"/>
        <end position="276"/>
    </location>
</feature>
<feature type="transmembrane region" description="Helical" evidence="2">
    <location>
        <begin position="17"/>
        <end position="37"/>
    </location>
</feature>
<feature type="domain" description="TNase-like" evidence="3">
    <location>
        <begin position="58"/>
        <end position="263"/>
    </location>
</feature>
<feature type="active site" evidence="3">
    <location>
        <position position="154"/>
    </location>
</feature>
<feature type="active site" evidence="3">
    <location>
        <position position="162"/>
    </location>
</feature>
<feature type="active site" evidence="3">
    <location>
        <position position="202"/>
    </location>
</feature>
<feature type="binding site" evidence="3">
    <location>
        <position position="159"/>
    </location>
    <ligand>
        <name>Ca(2+)</name>
        <dbReference type="ChEBI" id="CHEBI:29108"/>
    </ligand>
</feature>
<comment type="subcellular location">
    <subcellularLocation>
        <location>Mitochondrion</location>
    </subcellularLocation>
    <subcellularLocation>
        <location evidence="1">Membrane</location>
        <topology evidence="1">Single-pass membrane protein</topology>
    </subcellularLocation>
</comment>
<comment type="similarity">
    <text evidence="4">Belongs to the LCL3 family.</text>
</comment>
<name>LCL3_ZYGRC</name>
<accession>C5DZY8</accession>
<evidence type="ECO:0000250" key="1"/>
<evidence type="ECO:0000255" key="2"/>
<evidence type="ECO:0000255" key="3">
    <source>
        <dbReference type="PROSITE-ProRule" id="PRU00272"/>
    </source>
</evidence>
<evidence type="ECO:0000305" key="4"/>
<gene>
    <name type="primary">LCL3</name>
    <name type="ordered locus">ZYRO0G08272g</name>
</gene>
<sequence length="276" mass="31725">MGDNRNLPVTQPNSINFNVVILSIFFSGSFIGAWAFFNRFLKQYTKATEIPQNVFRKRWLFGKVTAVGDGDNFHFFHAPGGLIAGWGWLRPLPELNKSDPPISSSKVGSSVPIHRRIFDSIFGRNKTRTAYSNYFLGLPVPYKNKRNLPTISIRICGVDAPERAHFGNPAQPFSEEALIWLRHTLIGKCVWIKPLAVDQYNRCVAKVEYWTWTGWKNVSLEMVKQGLAVVYESKTSAEFDGEEDKYRFHEMAAKARRRGIWSQKQFETPGEYKRRI</sequence>
<protein>
    <recommendedName>
        <fullName>Probable endonuclease LCL3</fullName>
        <ecNumber>3.1.-.-</ecNumber>
    </recommendedName>
</protein>
<organism>
    <name type="scientific">Zygosaccharomyces rouxii (strain ATCC 2623 / CBS 732 / NBRC 1130 / NCYC 568 / NRRL Y-229)</name>
    <dbReference type="NCBI Taxonomy" id="559307"/>
    <lineage>
        <taxon>Eukaryota</taxon>
        <taxon>Fungi</taxon>
        <taxon>Dikarya</taxon>
        <taxon>Ascomycota</taxon>
        <taxon>Saccharomycotina</taxon>
        <taxon>Saccharomycetes</taxon>
        <taxon>Saccharomycetales</taxon>
        <taxon>Saccharomycetaceae</taxon>
        <taxon>Zygosaccharomyces</taxon>
    </lineage>
</organism>